<sequence>MSGRRGDHPGRMAPTPGRRTRNGSVNGHPGMANYPPDDANYRRSRRPPPMPSANRYLPPLGEQPEPERSRVPPRTTRAGERITVTRAAAMRSREMGSRMYLLVHRAATADGADKSGLTALTWPVMANFAVDSAMAVALANTLFFAAASGESKSRVALYLLITIAPFAVIAPLIGPALDRLQHGRRVALALSFGLRTALAVVLIMNYDGATGSFPSWVLYPCALAMMVFSKSFSVLRSAVTPRVMPPTIDLVRVNSRLTVFGLLGGTIAGGAIAAGVEFVCTHLFQLPGALFVVVAITIAGASLSMRIPRWVEVTSGEVPATLSYHRDRGRLRRRWPEEVKNLGGTLRQPLGRNIITSLWGNCTIKVMVGFLFLYPAFVAKAHEANGWVQLGMLGLIGAAAAVGNFAGNFTSARLQLGRPAVLVVRCTVLVTVLAIAAAVAGSLAATAIATLITAGSSAIAKASLDASLQHDLPEESRASGFGRSESTLQLAWVLGGAVGVLVYTELWVGFTAVSALLILGLAQTIVSFRGDSLIPGLGGNRPVMAEQETTRRGAAVAPQ</sequence>
<accession>P9WKR5</accession>
<accession>L0T6P7</accession>
<accession>Q10564</accession>
<comment type="subcellular location">
    <subcellularLocation>
        <location evidence="3">Cell membrane</location>
        <topology evidence="3">Multi-pass membrane protein</topology>
    </subcellularLocation>
</comment>
<comment type="similarity">
    <text evidence="3">To M.leprae ML2143.</text>
</comment>
<comment type="sequence caution" evidence="3">
    <conflict type="erroneous initiation">
        <sequence resource="EMBL-CDS" id="CCP43624"/>
    </conflict>
    <text>Truncated N-terminus.</text>
</comment>
<evidence type="ECO:0000255" key="1"/>
<evidence type="ECO:0000256" key="2">
    <source>
        <dbReference type="SAM" id="MobiDB-lite"/>
    </source>
</evidence>
<evidence type="ECO:0000305" key="3"/>
<organism>
    <name type="scientific">Mycobacterium tuberculosis (strain ATCC 25618 / H37Rv)</name>
    <dbReference type="NCBI Taxonomy" id="83332"/>
    <lineage>
        <taxon>Bacteria</taxon>
        <taxon>Bacillati</taxon>
        <taxon>Actinomycetota</taxon>
        <taxon>Actinomycetes</taxon>
        <taxon>Mycobacteriales</taxon>
        <taxon>Mycobacteriaceae</taxon>
        <taxon>Mycobacterium</taxon>
        <taxon>Mycobacterium tuberculosis complex</taxon>
    </lineage>
</organism>
<dbReference type="EMBL" id="AL123456">
    <property type="protein sequence ID" value="CCP43624.1"/>
    <property type="status" value="ALT_INIT"/>
    <property type="molecule type" value="Genomic_DNA"/>
</dbReference>
<dbReference type="PIR" id="A70780">
    <property type="entry name" value="A70780"/>
</dbReference>
<dbReference type="RefSeq" id="NP_215391.1">
    <property type="nucleotide sequence ID" value="NC_000962.3"/>
</dbReference>
<dbReference type="STRING" id="83332.Rv0876c"/>
<dbReference type="PaxDb" id="83332-Rv0876c"/>
<dbReference type="GeneID" id="885562"/>
<dbReference type="KEGG" id="mtu:Rv0876c"/>
<dbReference type="PATRIC" id="fig|83332.12.peg.978"/>
<dbReference type="TubercuList" id="Rv0876c"/>
<dbReference type="eggNOG" id="COG2814">
    <property type="taxonomic scope" value="Bacteria"/>
</dbReference>
<dbReference type="InParanoid" id="P9WKR5"/>
<dbReference type="OrthoDB" id="5170137at2"/>
<dbReference type="Proteomes" id="UP000001584">
    <property type="component" value="Chromosome"/>
</dbReference>
<dbReference type="GO" id="GO:0005576">
    <property type="term" value="C:extracellular region"/>
    <property type="evidence" value="ECO:0007005"/>
    <property type="project" value="MTBBASE"/>
</dbReference>
<dbReference type="GO" id="GO:0005886">
    <property type="term" value="C:plasma membrane"/>
    <property type="evidence" value="ECO:0007005"/>
    <property type="project" value="MTBBASE"/>
</dbReference>
<dbReference type="GO" id="GO:0015562">
    <property type="term" value="F:efflux transmembrane transporter activity"/>
    <property type="evidence" value="ECO:0000318"/>
    <property type="project" value="GO_Central"/>
</dbReference>
<dbReference type="GO" id="GO:0046677">
    <property type="term" value="P:response to antibiotic"/>
    <property type="evidence" value="ECO:0000318"/>
    <property type="project" value="GO_Central"/>
</dbReference>
<dbReference type="FunFam" id="1.20.1250.20:FF:000362">
    <property type="entry name" value="Major Facilitator Superfamily protein"/>
    <property type="match status" value="1"/>
</dbReference>
<dbReference type="Gene3D" id="1.20.1250.20">
    <property type="entry name" value="MFS general substrate transporter like domains"/>
    <property type="match status" value="1"/>
</dbReference>
<dbReference type="InterPro" id="IPR011701">
    <property type="entry name" value="MFS"/>
</dbReference>
<dbReference type="InterPro" id="IPR036259">
    <property type="entry name" value="MFS_trans_sf"/>
</dbReference>
<dbReference type="PANTHER" id="PTHR23513">
    <property type="entry name" value="INTEGRAL MEMBRANE EFFLUX PROTEIN-RELATED"/>
    <property type="match status" value="1"/>
</dbReference>
<dbReference type="PANTHER" id="PTHR23513:SF18">
    <property type="entry name" value="INTEGRAL MEMBRANE PROTEIN"/>
    <property type="match status" value="1"/>
</dbReference>
<dbReference type="Pfam" id="PF07690">
    <property type="entry name" value="MFS_1"/>
    <property type="match status" value="1"/>
</dbReference>
<dbReference type="SUPFAM" id="SSF103473">
    <property type="entry name" value="MFS general substrate transporter"/>
    <property type="match status" value="1"/>
</dbReference>
<proteinExistence type="evidence at protein level"/>
<protein>
    <recommendedName>
        <fullName>Uncharacterized protein Rv0876c</fullName>
    </recommendedName>
</protein>
<name>Y876_MYCTU</name>
<gene>
    <name type="ordered locus">Rv0876c</name>
    <name type="ORF">MTCY31.04c</name>
</gene>
<reference key="1">
    <citation type="journal article" date="1998" name="Nature">
        <title>Deciphering the biology of Mycobacterium tuberculosis from the complete genome sequence.</title>
        <authorList>
            <person name="Cole S.T."/>
            <person name="Brosch R."/>
            <person name="Parkhill J."/>
            <person name="Garnier T."/>
            <person name="Churcher C.M."/>
            <person name="Harris D.E."/>
            <person name="Gordon S.V."/>
            <person name="Eiglmeier K."/>
            <person name="Gas S."/>
            <person name="Barry C.E. III"/>
            <person name="Tekaia F."/>
            <person name="Badcock K."/>
            <person name="Basham D."/>
            <person name="Brown D."/>
            <person name="Chillingworth T."/>
            <person name="Connor R."/>
            <person name="Davies R.M."/>
            <person name="Devlin K."/>
            <person name="Feltwell T."/>
            <person name="Gentles S."/>
            <person name="Hamlin N."/>
            <person name="Holroyd S."/>
            <person name="Hornsby T."/>
            <person name="Jagels K."/>
            <person name="Krogh A."/>
            <person name="McLean J."/>
            <person name="Moule S."/>
            <person name="Murphy L.D."/>
            <person name="Oliver S."/>
            <person name="Osborne J."/>
            <person name="Quail M.A."/>
            <person name="Rajandream M.A."/>
            <person name="Rogers J."/>
            <person name="Rutter S."/>
            <person name="Seeger K."/>
            <person name="Skelton S."/>
            <person name="Squares S."/>
            <person name="Squares R."/>
            <person name="Sulston J.E."/>
            <person name="Taylor K."/>
            <person name="Whitehead S."/>
            <person name="Barrell B.G."/>
        </authorList>
    </citation>
    <scope>NUCLEOTIDE SEQUENCE [LARGE SCALE GENOMIC DNA]</scope>
    <source>
        <strain>ATCC 25618 / H37Rv</strain>
    </source>
</reference>
<reference key="2">
    <citation type="journal article" date="2011" name="Mol. Cell. Proteomics">
        <title>Proteogenomic analysis of Mycobacterium tuberculosis by high resolution mass spectrometry.</title>
        <authorList>
            <person name="Kelkar D.S."/>
            <person name="Kumar D."/>
            <person name="Kumar P."/>
            <person name="Balakrishnan L."/>
            <person name="Muthusamy B."/>
            <person name="Yadav A.K."/>
            <person name="Shrivastava P."/>
            <person name="Marimuthu A."/>
            <person name="Anand S."/>
            <person name="Sundaram H."/>
            <person name="Kingsbury R."/>
            <person name="Harsha H.C."/>
            <person name="Nair B."/>
            <person name="Prasad T.S."/>
            <person name="Chauhan D.S."/>
            <person name="Katoch K."/>
            <person name="Katoch V.M."/>
            <person name="Kumar P."/>
            <person name="Chaerkady R."/>
            <person name="Ramachandran S."/>
            <person name="Dash D."/>
            <person name="Pandey A."/>
        </authorList>
    </citation>
    <scope>IDENTIFICATION BY MASS SPECTROMETRY [LARGE SCALE ANALYSIS]</scope>
    <source>
        <strain>ATCC 25618 / H37Rv</strain>
    </source>
</reference>
<keyword id="KW-1003">Cell membrane</keyword>
<keyword id="KW-0472">Membrane</keyword>
<keyword id="KW-1185">Reference proteome</keyword>
<keyword id="KW-0812">Transmembrane</keyword>
<keyword id="KW-1133">Transmembrane helix</keyword>
<feature type="chain" id="PRO_0000103719" description="Uncharacterized protein Rv0876c">
    <location>
        <begin position="1"/>
        <end position="559"/>
    </location>
</feature>
<feature type="transmembrane region" description="Helical" evidence="1">
    <location>
        <begin position="128"/>
        <end position="148"/>
    </location>
</feature>
<feature type="transmembrane region" description="Helical" evidence="1">
    <location>
        <begin position="155"/>
        <end position="175"/>
    </location>
</feature>
<feature type="transmembrane region" description="Helical" evidence="1">
    <location>
        <begin position="186"/>
        <end position="206"/>
    </location>
</feature>
<feature type="transmembrane region" description="Helical" evidence="1">
    <location>
        <begin position="208"/>
        <end position="228"/>
    </location>
</feature>
<feature type="transmembrane region" description="Helical" evidence="1">
    <location>
        <begin position="259"/>
        <end position="279"/>
    </location>
</feature>
<feature type="transmembrane region" description="Helical" evidence="1">
    <location>
        <begin position="283"/>
        <end position="303"/>
    </location>
</feature>
<feature type="transmembrane region" description="Helical" evidence="1">
    <location>
        <begin position="358"/>
        <end position="378"/>
    </location>
</feature>
<feature type="transmembrane region" description="Helical" evidence="1">
    <location>
        <begin position="387"/>
        <end position="407"/>
    </location>
</feature>
<feature type="transmembrane region" description="Helical" evidence="1">
    <location>
        <begin position="428"/>
        <end position="448"/>
    </location>
</feature>
<feature type="transmembrane region" description="Helical" evidence="1">
    <location>
        <begin position="490"/>
        <end position="510"/>
    </location>
</feature>
<feature type="transmembrane region" description="Helical" evidence="1">
    <location>
        <begin position="515"/>
        <end position="535"/>
    </location>
</feature>
<feature type="region of interest" description="Disordered" evidence="2">
    <location>
        <begin position="1"/>
        <end position="76"/>
    </location>
</feature>
<feature type="compositionally biased region" description="Basic and acidic residues" evidence="2">
    <location>
        <begin position="1"/>
        <end position="10"/>
    </location>
</feature>